<keyword id="KW-0325">Glycoprotein</keyword>
<keyword id="KW-0378">Hydrolase</keyword>
<keyword id="KW-0472">Membrane</keyword>
<keyword id="KW-1185">Reference proteome</keyword>
<keyword id="KW-0812">Transmembrane</keyword>
<keyword id="KW-1133">Transmembrane helix</keyword>
<accession>Q10022</accession>
<evidence type="ECO:0000255" key="1"/>
<evidence type="ECO:0000256" key="2">
    <source>
        <dbReference type="SAM" id="MobiDB-lite"/>
    </source>
</evidence>
<evidence type="ECO:0000269" key="3">
    <source>
    </source>
</evidence>
<evidence type="ECO:0000305" key="4"/>
<evidence type="ECO:0000312" key="5">
    <source>
        <dbReference type="WormBase" id="T28D9.3a"/>
    </source>
</evidence>
<protein>
    <recommendedName>
        <fullName evidence="5">Phospholipid phosphatase homolog 1.2 homolog</fullName>
        <ecNumber evidence="4">3.1.3.-</ecNumber>
    </recommendedName>
</protein>
<reference key="1">
    <citation type="journal article" date="1998" name="Science">
        <title>Genome sequence of the nematode C. elegans: a platform for investigating biology.</title>
        <authorList>
            <consortium name="The C. elegans sequencing consortium"/>
        </authorList>
    </citation>
    <scope>NUCLEOTIDE SEQUENCE [LARGE SCALE GENOMIC DNA]</scope>
    <source>
        <strain>Bristol N2</strain>
    </source>
</reference>
<reference key="2">
    <citation type="journal article" date="2007" name="Mol. Cell. Proteomics">
        <title>Proteomics reveals N-linked glycoprotein diversity in Caenorhabditis elegans and suggests an atypical translocation mechanism for integral membrane proteins.</title>
        <authorList>
            <person name="Kaji H."/>
            <person name="Kamiie J."/>
            <person name="Kawakami H."/>
            <person name="Kido K."/>
            <person name="Yamauchi Y."/>
            <person name="Shinkawa T."/>
            <person name="Taoka M."/>
            <person name="Takahashi N."/>
            <person name="Isobe T."/>
        </authorList>
    </citation>
    <scope>GLYCOSYLATION [LARGE SCALE ANALYSIS] AT ASN-162</scope>
    <scope>IDENTIFICATION BY MASS SPECTROMETRY</scope>
    <source>
        <strain>Bristol N2</strain>
    </source>
</reference>
<dbReference type="EC" id="3.1.3.-" evidence="4"/>
<dbReference type="EMBL" id="BX284602">
    <property type="protein sequence ID" value="CCD72701.1"/>
    <property type="molecule type" value="Genomic_DNA"/>
</dbReference>
<dbReference type="PIR" id="T16951">
    <property type="entry name" value="T16951"/>
</dbReference>
<dbReference type="RefSeq" id="NP_001022377.1">
    <property type="nucleotide sequence ID" value="NM_001027206.2"/>
</dbReference>
<dbReference type="FunCoup" id="Q10022">
    <property type="interactions" value="173"/>
</dbReference>
<dbReference type="STRING" id="6239.T28D9.3d.1"/>
<dbReference type="GlyCosmos" id="Q10022">
    <property type="glycosylation" value="1 site, No reported glycans"/>
</dbReference>
<dbReference type="iPTMnet" id="Q10022"/>
<dbReference type="PaxDb" id="6239-T28D9.3d"/>
<dbReference type="EnsemblMetazoa" id="T28D9.3a.1">
    <property type="protein sequence ID" value="T28D9.3a.1"/>
    <property type="gene ID" value="WBGene00020895"/>
</dbReference>
<dbReference type="GeneID" id="174071"/>
<dbReference type="KEGG" id="cel:CELE_T28D9.3"/>
<dbReference type="UCSC" id="T28D9.3d">
    <property type="organism name" value="c. elegans"/>
</dbReference>
<dbReference type="AGR" id="WB:WBGene00020895"/>
<dbReference type="CTD" id="174071"/>
<dbReference type="WormBase" id="T28D9.3a">
    <property type="protein sequence ID" value="CE02068"/>
    <property type="gene ID" value="WBGene00020895"/>
    <property type="gene designation" value="plpp-1.2"/>
</dbReference>
<dbReference type="eggNOG" id="KOG3030">
    <property type="taxonomic scope" value="Eukaryota"/>
</dbReference>
<dbReference type="InParanoid" id="Q10022"/>
<dbReference type="OMA" id="MLYNLVM"/>
<dbReference type="OrthoDB" id="8907274at2759"/>
<dbReference type="Reactome" id="R-CEL-9845614">
    <property type="pathway name" value="Sphingolipid catabolism"/>
</dbReference>
<dbReference type="PRO" id="PR:Q10022"/>
<dbReference type="Proteomes" id="UP000001940">
    <property type="component" value="Chromosome II"/>
</dbReference>
<dbReference type="Bgee" id="WBGene00020895">
    <property type="expression patterns" value="Expressed in larva and 3 other cell types or tissues"/>
</dbReference>
<dbReference type="ExpressionAtlas" id="Q10022">
    <property type="expression patterns" value="baseline and differential"/>
</dbReference>
<dbReference type="GO" id="GO:0005886">
    <property type="term" value="C:plasma membrane"/>
    <property type="evidence" value="ECO:0000318"/>
    <property type="project" value="GO_Central"/>
</dbReference>
<dbReference type="GO" id="GO:0008195">
    <property type="term" value="F:phosphatidate phosphatase activity"/>
    <property type="evidence" value="ECO:0000318"/>
    <property type="project" value="GO_Central"/>
</dbReference>
<dbReference type="GO" id="GO:0046839">
    <property type="term" value="P:phospholipid dephosphorylation"/>
    <property type="evidence" value="ECO:0000318"/>
    <property type="project" value="GO_Central"/>
</dbReference>
<dbReference type="GO" id="GO:0006644">
    <property type="term" value="P:phospholipid metabolic process"/>
    <property type="evidence" value="ECO:0000318"/>
    <property type="project" value="GO_Central"/>
</dbReference>
<dbReference type="GO" id="GO:0007165">
    <property type="term" value="P:signal transduction"/>
    <property type="evidence" value="ECO:0000318"/>
    <property type="project" value="GO_Central"/>
</dbReference>
<dbReference type="CDD" id="cd03384">
    <property type="entry name" value="PAP2_wunen"/>
    <property type="match status" value="1"/>
</dbReference>
<dbReference type="FunFam" id="1.20.144.10:FF:000051">
    <property type="entry name" value="Phospholipid phosphatase homolog 1.2 homolog"/>
    <property type="match status" value="1"/>
</dbReference>
<dbReference type="Gene3D" id="1.20.144.10">
    <property type="entry name" value="Phosphatidic acid phosphatase type 2/haloperoxidase"/>
    <property type="match status" value="1"/>
</dbReference>
<dbReference type="InterPro" id="IPR036938">
    <property type="entry name" value="P_Acid_Pase_2/haloperoxi_sf"/>
</dbReference>
<dbReference type="InterPro" id="IPR000326">
    <property type="entry name" value="P_Acid_Pase_2/haloperoxidase"/>
</dbReference>
<dbReference type="InterPro" id="IPR043216">
    <property type="entry name" value="PA_PP_rel"/>
</dbReference>
<dbReference type="PANTHER" id="PTHR10165">
    <property type="entry name" value="LIPID PHOSPHATE PHOSPHATASE"/>
    <property type="match status" value="1"/>
</dbReference>
<dbReference type="PANTHER" id="PTHR10165:SF103">
    <property type="entry name" value="PHOSPHOLIPID PHOSPHATASE HOMOLOG 1.2 HOMOLOG"/>
    <property type="match status" value="1"/>
</dbReference>
<dbReference type="Pfam" id="PF01569">
    <property type="entry name" value="PAP2"/>
    <property type="match status" value="1"/>
</dbReference>
<dbReference type="SMART" id="SM00014">
    <property type="entry name" value="acidPPc"/>
    <property type="match status" value="1"/>
</dbReference>
<dbReference type="SUPFAM" id="SSF48317">
    <property type="entry name" value="Acid phosphatase/Vanadium-dependent haloperoxidase"/>
    <property type="match status" value="1"/>
</dbReference>
<name>PLP12_CAEEL</name>
<comment type="subcellular location">
    <subcellularLocation>
        <location evidence="4">Membrane</location>
        <topology evidence="4">Multi-pass membrane protein</topology>
    </subcellularLocation>
</comment>
<comment type="similarity">
    <text evidence="4">Belongs to the PA-phosphatase related phosphoesterase family.</text>
</comment>
<feature type="chain" id="PRO_0000065485" description="Phospholipid phosphatase homolog 1.2 homolog">
    <location>
        <begin position="1"/>
        <end position="341"/>
    </location>
</feature>
<feature type="transmembrane region" description="Helical" evidence="1">
    <location>
        <begin position="30"/>
        <end position="50"/>
    </location>
</feature>
<feature type="transmembrane region" description="Helical" evidence="1">
    <location>
        <begin position="71"/>
        <end position="91"/>
    </location>
</feature>
<feature type="transmembrane region" description="Helical" evidence="1">
    <location>
        <begin position="122"/>
        <end position="142"/>
    </location>
</feature>
<feature type="transmembrane region" description="Helical" evidence="1">
    <location>
        <begin position="223"/>
        <end position="243"/>
    </location>
</feature>
<feature type="transmembrane region" description="Helical" evidence="1">
    <location>
        <begin position="257"/>
        <end position="277"/>
    </location>
</feature>
<feature type="region of interest" description="Disordered" evidence="2">
    <location>
        <begin position="284"/>
        <end position="308"/>
    </location>
</feature>
<feature type="region of interest" description="Disordered" evidence="2">
    <location>
        <begin position="322"/>
        <end position="341"/>
    </location>
</feature>
<feature type="compositionally biased region" description="Basic and acidic residues" evidence="2">
    <location>
        <begin position="299"/>
        <end position="308"/>
    </location>
</feature>
<feature type="glycosylation site" description="N-linked (GlcNAc...) asparagine" evidence="3">
    <location>
        <position position="162"/>
    </location>
</feature>
<organism>
    <name type="scientific">Caenorhabditis elegans</name>
    <dbReference type="NCBI Taxonomy" id="6239"/>
    <lineage>
        <taxon>Eukaryota</taxon>
        <taxon>Metazoa</taxon>
        <taxon>Ecdysozoa</taxon>
        <taxon>Nematoda</taxon>
        <taxon>Chromadorea</taxon>
        <taxon>Rhabditida</taxon>
        <taxon>Rhabditina</taxon>
        <taxon>Rhabditomorpha</taxon>
        <taxon>Rhabditoidea</taxon>
        <taxon>Rhabditidae</taxon>
        <taxon>Peloderinae</taxon>
        <taxon>Caenorhabditis</taxon>
    </lineage>
</organism>
<sequence length="341" mass="39028">MRDHVEFCYYVIIYSLEKFQQRSKQFGISLFIFFLATAAVTVIVPTLLGVSQRGFFCDDDSIRYEYRKDTITAVQLMLYNLVLNAATVLFVEYYRMQKVESNINNPRYRWRNNHLHVLFVRLLTYFGYSQIGFVMNIALNIVTKHVVGRLRPHFLDVCKLANDTCVTGDSHRYITDYTCTGPPELVLEARKSFYSGHSAVSLYCATWSALYIQARLGPVLNNRIVVPISQTLMFMIGLGISFSRITDNKHHWSDVLVGIFIGIFLAVYTCTFWTDLFSNNSTESETQPLLLPRPPRTPRNSEDEERHRLDAVLPSTDSSIVFEATGPQDSDTILLPVPQSA</sequence>
<proteinExistence type="evidence at protein level"/>
<gene>
    <name evidence="5" type="primary">plpp-1.2</name>
    <name evidence="5" type="ORF">T28D9.3</name>
</gene>